<proteinExistence type="evidence at protein level"/>
<dbReference type="EMBL" id="X94688">
    <property type="protein sequence ID" value="CAA64344.1"/>
    <property type="molecule type" value="Genomic_DNA"/>
</dbReference>
<dbReference type="EMBL" id="AE004438">
    <property type="protein sequence ID" value="AAG20893.1"/>
    <property type="molecule type" value="Genomic_DNA"/>
</dbReference>
<dbReference type="RefSeq" id="WP_010904106.1">
    <property type="nucleotide sequence ID" value="NZ_BK010831.1"/>
</dbReference>
<dbReference type="SMR" id="Q48311"/>
<dbReference type="GeneID" id="68695197"/>
<dbReference type="KEGG" id="hal:VNG_6239G"/>
<dbReference type="PATRIC" id="fig|64091.14.peg.2241"/>
<dbReference type="HOGENOM" id="CLU_1418666_0_0_2"/>
<dbReference type="InParanoid" id="Q48311"/>
<dbReference type="OrthoDB" id="56053at2157"/>
<dbReference type="Proteomes" id="UP000000554">
    <property type="component" value="Plasmid pNRC200"/>
</dbReference>
<dbReference type="GO" id="GO:0005737">
    <property type="term" value="C:cytoplasm"/>
    <property type="evidence" value="ECO:0007669"/>
    <property type="project" value="UniProtKB-SubCell"/>
</dbReference>
<dbReference type="GO" id="GO:0003677">
    <property type="term" value="F:DNA binding"/>
    <property type="evidence" value="ECO:0007669"/>
    <property type="project" value="UniProtKB-KW"/>
</dbReference>
<dbReference type="CDD" id="cd00090">
    <property type="entry name" value="HTH_ARSR"/>
    <property type="match status" value="1"/>
</dbReference>
<dbReference type="Gene3D" id="1.10.10.10">
    <property type="entry name" value="Winged helix-like DNA-binding domain superfamily/Winged helix DNA-binding domain"/>
    <property type="match status" value="1"/>
</dbReference>
<dbReference type="InterPro" id="IPR011991">
    <property type="entry name" value="ArsR-like_HTH"/>
</dbReference>
<dbReference type="InterPro" id="IPR005149">
    <property type="entry name" value="Tscrpt_reg_PadR_N"/>
</dbReference>
<dbReference type="InterPro" id="IPR036388">
    <property type="entry name" value="WH-like_DNA-bd_sf"/>
</dbReference>
<dbReference type="InterPro" id="IPR036390">
    <property type="entry name" value="WH_DNA-bd_sf"/>
</dbReference>
<dbReference type="Pfam" id="PF03551">
    <property type="entry name" value="PadR"/>
    <property type="match status" value="1"/>
</dbReference>
<dbReference type="SUPFAM" id="SSF46785">
    <property type="entry name" value="Winged helix' DNA-binding domain"/>
    <property type="match status" value="1"/>
</dbReference>
<name>GVPE2_HALSA</name>
<accession>Q48311</accession>
<accession>Q9HHT3</accession>
<sequence length="193" mass="20961">MDDLLAELKSEMDAAGVDADVEFSLPTLELTAALDATIDDTSQLYTDDPPHHYTDTPLTGDDLPLLEAWLDDAQLHGVGDDIIAEYIDEVLLVLITVRGGACGKELLQDVRRLFGADVSPGTMYPHLKQLADAGLLEMSELTKRKVYRVADAQAAIEHVDSVVLQLLTFAVGLQTIMADCIVNQSADPQPQDE</sequence>
<gene>
    <name evidence="14" type="primary">gvpE2</name>
    <name evidence="7" type="synonym">c-gvpE</name>
    <name type="synonym">gvpE</name>
    <name evidence="14" type="ordered locus">VNG_6239G</name>
</gene>
<comment type="function">
    <text evidence="1 2 3 6">Plays a regulatory role in gas vesicle synthesis, required to activate transcription of the c-gvpA operon (PubMed:12123460, PubMed:23589224, PubMed:9642059). Gas vesicles are hollow, gas filled proteinaceous nanostructures found in several microbial planktonic microorganisms. They allow positioning of halobacteria at the optimal depth for growth in the poorly aerated, shallow brine pools of their habitat (PubMed:33711860).</text>
</comment>
<comment type="function">
    <text evidence="5">Expression of 2 c-vac DNA fragments containing 2 divergently transcribed regions (gvpE-gvpF-gvpG-gvpH-gvpI-gvpJ-gvpK-gvpL-gvpM and gvpA-gvpC-gvpN-gvpO) allows H.volcanii to produce gas vesicles. All site-directed mutagenesis is tested in H.volcanii.</text>
</comment>
<comment type="activity regulation">
    <text evidence="11 12">Degraded once GvpD is translated; degradation requires 'Arg-494' of GvpD; tested in transgenic H.volcanii (PubMed:17379705, PubMed:23589224). Fusion of green fluorescent protein to its C-terminus partially protects it from degradation (PubMed:23589224).</text>
</comment>
<comment type="subunit">
    <text evidence="10 11 13">Homodimer (Probable). Interacts with endogenous GvpD, also with GvpD from H.mediterranei (Probable).</text>
</comment>
<comment type="subcellular location">
    <subcellularLocation>
        <location evidence="9">Cytoplasm</location>
    </subcellularLocation>
    <text evidence="9">Probably not part of the mature gas vesicle.</text>
</comment>
<comment type="induction">
    <text evidence="3 4">In PHH4 (a deletion of the p-vac locus) detected starting late in exponential growth, increasing in level by stationary phase and remaining at that level (at protein level). Transcribed in all growth phases, maximal expression in mid-stationary phase. An unstable 6kb transcript able to cover gvpD-gvpE-gvpF-gvpG-gvpH-gvpI-gvpJ-gvpK-gvpL-gvpM is detected, as well as smaller transcripts (PubMed:8763925). Not translated in strain PHH1, which has an intact p-vac locus (PubMed:8763925). Gas vesicles appear earlier when grown in static culture, possibly due to O(2)-limitation (PubMed:33711860).</text>
</comment>
<comment type="miscellaneous">
    <text evidence="4">Encoded in a 14-gene locus called c-vac which produces cylindrical gas vesicles only in the stationary growth phase.</text>
</comment>
<comment type="miscellaneous">
    <text evidence="2">In Schmidt et al., GvpD comes from H.mediterranei while GvpE is from the c-locus of H.salinarum.</text>
</comment>
<geneLocation type="plasmid">
    <name>pNRC200</name>
</geneLocation>
<evidence type="ECO:0000269" key="1">
    <source>
    </source>
</evidence>
<evidence type="ECO:0000269" key="2">
    <source>
    </source>
</evidence>
<evidence type="ECO:0000269" key="3">
    <source>
    </source>
</evidence>
<evidence type="ECO:0000269" key="4">
    <source>
    </source>
</evidence>
<evidence type="ECO:0000269" key="5">
    <source>
    </source>
</evidence>
<evidence type="ECO:0000269" key="6">
    <source>
    </source>
</evidence>
<evidence type="ECO:0000303" key="7">
    <source>
    </source>
</evidence>
<evidence type="ECO:0000303" key="8">
    <source>
    </source>
</evidence>
<evidence type="ECO:0000305" key="9"/>
<evidence type="ECO:0000305" key="10">
    <source>
    </source>
</evidence>
<evidence type="ECO:0000305" key="11">
    <source>
    </source>
</evidence>
<evidence type="ECO:0000305" key="12">
    <source>
    </source>
</evidence>
<evidence type="ECO:0000305" key="13">
    <source>
    </source>
</evidence>
<evidence type="ECO:0000312" key="14">
    <source>
        <dbReference type="EMBL" id="AAG20893.1"/>
    </source>
</evidence>
<evidence type="ECO:0000312" key="15">
    <source>
        <dbReference type="EMBL" id="CAA64344.1"/>
    </source>
</evidence>
<reference evidence="15" key="1">
    <citation type="journal article" date="1996" name="J. Bacteriol.">
        <title>Transcript analysis of the c-vac region and differential synthesis of the two regulatory gas vesicle proteins GvpD and GvpE in Halobacterium salinarium PHH4.</title>
        <authorList>
            <person name="Krueger K."/>
            <person name="Pfeifer F."/>
        </authorList>
    </citation>
    <scope>NUCLEOTIDE SEQUENCE [GENOMIC DNA]</scope>
    <scope>INDUCTION</scope>
    <source>
        <strain>PHH1 /PHH4</strain>
    </source>
</reference>
<reference evidence="14" key="2">
    <citation type="journal article" date="2000" name="Proc. Natl. Acad. Sci. U.S.A.">
        <title>Genome sequence of Halobacterium species NRC-1.</title>
        <authorList>
            <person name="Ng W.V."/>
            <person name="Kennedy S.P."/>
            <person name="Mahairas G.G."/>
            <person name="Berquist B."/>
            <person name="Pan M."/>
            <person name="Shukla H.D."/>
            <person name="Lasky S.R."/>
            <person name="Baliga N.S."/>
            <person name="Thorsson V."/>
            <person name="Sbrogna J."/>
            <person name="Swartzell S."/>
            <person name="Weir D."/>
            <person name="Hall J."/>
            <person name="Dahl T.A."/>
            <person name="Welti R."/>
            <person name="Goo Y.A."/>
            <person name="Leithauser B."/>
            <person name="Keller K."/>
            <person name="Cruz R."/>
            <person name="Danson M.J."/>
            <person name="Hough D.W."/>
            <person name="Maddocks D.G."/>
            <person name="Jablonski P.E."/>
            <person name="Krebs M.P."/>
            <person name="Angevine C.M."/>
            <person name="Dale H."/>
            <person name="Isenbarger T.A."/>
            <person name="Peck R.F."/>
            <person name="Pohlschroder M."/>
            <person name="Spudich J.L."/>
            <person name="Jung K.-H."/>
            <person name="Alam M."/>
            <person name="Freitas T."/>
            <person name="Hou S."/>
            <person name="Daniels C.J."/>
            <person name="Dennis P.P."/>
            <person name="Omer A.D."/>
            <person name="Ebhardt H."/>
            <person name="Lowe T.M."/>
            <person name="Liang P."/>
            <person name="Riley M."/>
            <person name="Hood L."/>
            <person name="DasSarma S."/>
        </authorList>
    </citation>
    <scope>NUCLEOTIDE SEQUENCE [LARGE SCALE GENOMIC DNA]</scope>
    <source>
        <strain>ATCC 700922 / JCM 11081 / NRC-1</strain>
        <plasmid>pNRC200</plasmid>
    </source>
</reference>
<reference key="3">
    <citation type="journal article" date="1997" name="Microbiology">
        <title>Growth competition between Halobacterium salinarium strain PHH1 and mutants affected in gas vesicle synthesis.</title>
        <authorList>
            <person name="Beard S.J."/>
            <person name="Hayes P.K."/>
            <person name="Walsby A.E."/>
        </authorList>
    </citation>
    <scope>FUNCTION IN BUOYANCY</scope>
    <scope>POSSIBLE INDUCTION BY OXYGEN LIMITATION</scope>
    <source>
        <strain>PHH1</strain>
    </source>
</reference>
<reference key="4">
    <citation type="journal article" date="1998" name="J. Mol. Biol.">
        <title>The transcriptional activator GvpE for the halobacterial gas vesicle genes resembles a basic region leucine-zipper regulatory protein.</title>
        <authorList>
            <person name="Krueger K."/>
            <person name="Hermann T."/>
            <person name="Armbruster V."/>
            <person name="Pfeifer F."/>
        </authorList>
    </citation>
    <scope>FUNCTION AS A TRANSCRIPTIONAL ACTIVATOR</scope>
    <scope>FUNCTION</scope>
    <scope>SUBUNIT</scope>
    <scope>DOMAIN</scope>
    <scope>MUTAGENESIS OF 143-LYS--LYS-145</scope>
    <source>
        <strain>PHH1</strain>
    </source>
</reference>
<reference key="5">
    <citation type="journal article" date="1998" name="Microbiology">
        <title>Structural characteristics of halobacterial gas vesicles.</title>
        <authorList>
            <person name="Offner S."/>
            <person name="Ziese U."/>
            <person name="Wanner G."/>
            <person name="Typke D."/>
            <person name="Pfeifer F."/>
        </authorList>
    </citation>
    <scope>FUNCTION</scope>
    <source>
        <strain>PHH1</strain>
    </source>
</reference>
<reference key="6">
    <citation type="journal article" date="2002" name="Mol. Microbiol.">
        <title>A bZIP protein from halophilic archaea: structural features and dimer formation of cGvpE from Halobacterium salinarum.</title>
        <authorList>
            <person name="Ploesser P."/>
            <person name="Pfeifer F."/>
        </authorList>
    </citation>
    <scope>FUNCTION AS A TRANSCRIPTIONAL ACTIVATOR</scope>
    <scope>SUBUNIT</scope>
    <scope>DOMAIN</scope>
    <scope>MUTAGENESIS OF 104-LYS--ARG-112; LYS-104; 111-ARG-ARG-112; ARG-111; ARG-112; VAL-159; 160-ASP--VAL-163; LEU-166; 173-LEU--CYS-180 AND CYS-180</scope>
    <source>
        <strain>PHH1 / PHH4</strain>
    </source>
</reference>
<reference key="7">
    <citation type="journal article" date="2007" name="Microbiology">
        <title>GvpD-induced breakdown of the transcriptional activator GvpE of halophilic archaea requires a functional p-loop and an arginine-rich region of GvpD.</title>
        <authorList>
            <person name="Scheuch S."/>
            <person name="Pfeifer F."/>
        </authorList>
    </citation>
    <scope>ACTIVITY REGULATION</scope>
    <scope>INTERACTION WITH GVPD</scope>
    <source>
        <strain>PHH1</strain>
    </source>
</reference>
<reference key="8">
    <citation type="journal article" date="2013" name="Arch. Microbiol.">
        <title>Use of GFP-GvpE fusions to quantify the GvpD-mediated reduction of the transcriptional activator GvpE in haloarchaea.</title>
        <authorList>
            <person name="Schmidt I."/>
            <person name="Pfeifer F."/>
        </authorList>
    </citation>
    <scope>FUNCTION AS A TRANSCRIPTIONAL ACTIVATOR</scope>
    <scope>ACTIVITY REGULATION</scope>
</reference>
<keyword id="KW-0010">Activator</keyword>
<keyword id="KW-0963">Cytoplasm</keyword>
<keyword id="KW-0238">DNA-binding</keyword>
<keyword id="KW-0614">Plasmid</keyword>
<keyword id="KW-1185">Reference proteome</keyword>
<keyword id="KW-0804">Transcription</keyword>
<keyword id="KW-0805">Transcription regulation</keyword>
<protein>
    <recommendedName>
        <fullName evidence="8">Transcriptional activator GvpE2</fullName>
    </recommendedName>
    <alternativeName>
        <fullName evidence="7">cGvpE</fullName>
    </alternativeName>
</protein>
<organism>
    <name type="scientific">Halobacterium salinarum (strain ATCC 700922 / JCM 11081 / NRC-1)</name>
    <name type="common">Halobacterium halobium</name>
    <dbReference type="NCBI Taxonomy" id="64091"/>
    <lineage>
        <taxon>Archaea</taxon>
        <taxon>Methanobacteriati</taxon>
        <taxon>Methanobacteriota</taxon>
        <taxon>Stenosarchaea group</taxon>
        <taxon>Halobacteria</taxon>
        <taxon>Halobacteriales</taxon>
        <taxon>Halobacteriaceae</taxon>
        <taxon>Halobacterium</taxon>
        <taxon>Halobacterium salinarum NRC-34001</taxon>
    </lineage>
</organism>
<feature type="chain" id="PRO_0000182679" description="Transcriptional activator GvpE2">
    <location>
        <begin position="1"/>
        <end position="193"/>
    </location>
</feature>
<feature type="region of interest" description="Leucine-zipper" evidence="10 13">
    <location>
        <begin position="153"/>
        <end position="184"/>
    </location>
</feature>
<feature type="binding site" evidence="13">
    <location>
        <begin position="143"/>
        <end position="148"/>
    </location>
    <ligand>
        <name>DNA</name>
        <dbReference type="ChEBI" id="CHEBI:16991"/>
    </ligand>
</feature>
<feature type="mutagenesis site" description="No longer activates transcription." evidence="1">
    <original>KELLQDVRR</original>
    <variation>AELLQDVAA</variation>
    <location>
        <begin position="104"/>
        <end position="112"/>
    </location>
</feature>
<feature type="mutagenesis site" description="About 10% transcription activation." evidence="1">
    <original>KELLQDVRR</original>
    <variation>AELLQDVRA</variation>
    <location>
        <begin position="104"/>
        <end position="112"/>
    </location>
</feature>
<feature type="mutagenesis site" description="About 5% transcription activation." evidence="1">
    <original>K</original>
    <variation>A</variation>
    <location>
        <position position="104"/>
    </location>
</feature>
<feature type="mutagenesis site" description="About 70% transcription activation." evidence="1">
    <original>RR</original>
    <variation>AA</variation>
    <location>
        <begin position="111"/>
        <end position="112"/>
    </location>
</feature>
<feature type="mutagenesis site" description="About 50% transcription activation." evidence="1">
    <original>R</original>
    <variation>A</variation>
    <location>
        <position position="111"/>
    </location>
</feature>
<feature type="mutagenesis site" description="About 70% transcription activation." evidence="1">
    <original>R</original>
    <variation>A</variation>
    <location>
        <position position="112"/>
    </location>
</feature>
<feature type="mutagenesis site" description="H.volcanii no longer translates gvpA." evidence="6">
    <original>KRK</original>
    <variation>AAA</variation>
    <variation>ARA</variation>
    <variation>ERA</variation>
    <variation>ERE</variation>
    <location>
        <begin position="143"/>
        <end position="145"/>
    </location>
</feature>
<feature type="mutagenesis site" description="No longer activates transcription, does form probable dimer." evidence="1">
    <original>V</original>
    <variation>D</variation>
    <location>
        <position position="159"/>
    </location>
</feature>
<feature type="mutagenesis site" description="Still activates transcription." evidence="1">
    <original>DSVV</original>
    <variation>GSVS</variation>
    <location>
        <begin position="160"/>
        <end position="163"/>
    </location>
</feature>
<feature type="mutagenesis site" description="No longer activates transcription, does not form probable dimer." evidence="1">
    <original>L</original>
    <variation>E</variation>
    <location>
        <position position="166"/>
    </location>
</feature>
<feature type="mutagenesis site" description="No longer activates transcription, does not form probable dimer." evidence="1">
    <original>LQTIMADC</original>
    <variation>EQTIMADL</variation>
    <location>
        <begin position="173"/>
        <end position="180"/>
    </location>
</feature>
<feature type="mutagenesis site" description="Still activates transcription." evidence="1">
    <original>C</original>
    <variation>D</variation>
    <variation>L</variation>
    <location>
        <position position="180"/>
    </location>
</feature>